<protein>
    <recommendedName>
        <fullName evidence="1">Large ribosomal subunit protein uL18</fullName>
    </recommendedName>
    <alternativeName>
        <fullName evidence="2">50S ribosomal protein L18</fullName>
    </alternativeName>
</protein>
<gene>
    <name evidence="1" type="primary">rplR</name>
    <name type="ordered locus">ACIAD3203</name>
</gene>
<keyword id="KW-0687">Ribonucleoprotein</keyword>
<keyword id="KW-0689">Ribosomal protein</keyword>
<keyword id="KW-0694">RNA-binding</keyword>
<keyword id="KW-0699">rRNA-binding</keyword>
<dbReference type="EMBL" id="CR543861">
    <property type="protein sequence ID" value="CAG69887.1"/>
    <property type="molecule type" value="Genomic_DNA"/>
</dbReference>
<dbReference type="RefSeq" id="WP_004924139.1">
    <property type="nucleotide sequence ID" value="NC_005966.1"/>
</dbReference>
<dbReference type="SMR" id="Q6F7S8"/>
<dbReference type="STRING" id="202950.GCA_001485005_02952"/>
<dbReference type="GeneID" id="67513067"/>
<dbReference type="KEGG" id="aci:ACIAD3203"/>
<dbReference type="eggNOG" id="COG0256">
    <property type="taxonomic scope" value="Bacteria"/>
</dbReference>
<dbReference type="HOGENOM" id="CLU_098841_0_1_6"/>
<dbReference type="OrthoDB" id="9810939at2"/>
<dbReference type="BioCyc" id="ASP62977:ACIAD_RS14515-MONOMER"/>
<dbReference type="Proteomes" id="UP000000430">
    <property type="component" value="Chromosome"/>
</dbReference>
<dbReference type="GO" id="GO:0022625">
    <property type="term" value="C:cytosolic large ribosomal subunit"/>
    <property type="evidence" value="ECO:0007669"/>
    <property type="project" value="TreeGrafter"/>
</dbReference>
<dbReference type="GO" id="GO:0008097">
    <property type="term" value="F:5S rRNA binding"/>
    <property type="evidence" value="ECO:0007669"/>
    <property type="project" value="TreeGrafter"/>
</dbReference>
<dbReference type="GO" id="GO:0003735">
    <property type="term" value="F:structural constituent of ribosome"/>
    <property type="evidence" value="ECO:0007669"/>
    <property type="project" value="InterPro"/>
</dbReference>
<dbReference type="GO" id="GO:0006412">
    <property type="term" value="P:translation"/>
    <property type="evidence" value="ECO:0007669"/>
    <property type="project" value="UniProtKB-UniRule"/>
</dbReference>
<dbReference type="CDD" id="cd00432">
    <property type="entry name" value="Ribosomal_L18_L5e"/>
    <property type="match status" value="1"/>
</dbReference>
<dbReference type="FunFam" id="3.30.420.100:FF:000001">
    <property type="entry name" value="50S ribosomal protein L18"/>
    <property type="match status" value="1"/>
</dbReference>
<dbReference type="Gene3D" id="3.30.420.100">
    <property type="match status" value="1"/>
</dbReference>
<dbReference type="HAMAP" id="MF_01337_B">
    <property type="entry name" value="Ribosomal_uL18_B"/>
    <property type="match status" value="1"/>
</dbReference>
<dbReference type="InterPro" id="IPR004389">
    <property type="entry name" value="Ribosomal_uL18_bac-type"/>
</dbReference>
<dbReference type="InterPro" id="IPR005484">
    <property type="entry name" value="Ribosomal_uL18_bac/euk"/>
</dbReference>
<dbReference type="NCBIfam" id="TIGR00060">
    <property type="entry name" value="L18_bact"/>
    <property type="match status" value="1"/>
</dbReference>
<dbReference type="PANTHER" id="PTHR12899">
    <property type="entry name" value="39S RIBOSOMAL PROTEIN L18, MITOCHONDRIAL"/>
    <property type="match status" value="1"/>
</dbReference>
<dbReference type="PANTHER" id="PTHR12899:SF3">
    <property type="entry name" value="LARGE RIBOSOMAL SUBUNIT PROTEIN UL18M"/>
    <property type="match status" value="1"/>
</dbReference>
<dbReference type="Pfam" id="PF00861">
    <property type="entry name" value="Ribosomal_L18p"/>
    <property type="match status" value="1"/>
</dbReference>
<dbReference type="SUPFAM" id="SSF53137">
    <property type="entry name" value="Translational machinery components"/>
    <property type="match status" value="1"/>
</dbReference>
<reference key="1">
    <citation type="journal article" date="2004" name="Nucleic Acids Res.">
        <title>Unique features revealed by the genome sequence of Acinetobacter sp. ADP1, a versatile and naturally transformation competent bacterium.</title>
        <authorList>
            <person name="Barbe V."/>
            <person name="Vallenet D."/>
            <person name="Fonknechten N."/>
            <person name="Kreimeyer A."/>
            <person name="Oztas S."/>
            <person name="Labarre L."/>
            <person name="Cruveiller S."/>
            <person name="Robert C."/>
            <person name="Duprat S."/>
            <person name="Wincker P."/>
            <person name="Ornston L.N."/>
            <person name="Weissenbach J."/>
            <person name="Marliere P."/>
            <person name="Cohen G.N."/>
            <person name="Medigue C."/>
        </authorList>
    </citation>
    <scope>NUCLEOTIDE SEQUENCE [LARGE SCALE GENOMIC DNA]</scope>
    <source>
        <strain>ATCC 33305 / BD413 / ADP1</strain>
    </source>
</reference>
<feature type="chain" id="PRO_0000131197" description="Large ribosomal subunit protein uL18">
    <location>
        <begin position="1"/>
        <end position="116"/>
    </location>
</feature>
<comment type="function">
    <text evidence="1">This is one of the proteins that bind and probably mediate the attachment of the 5S RNA into the large ribosomal subunit, where it forms part of the central protuberance.</text>
</comment>
<comment type="subunit">
    <text evidence="1">Part of the 50S ribosomal subunit; part of the 5S rRNA/L5/L18/L25 subcomplex. Contacts the 5S and 23S rRNAs.</text>
</comment>
<comment type="similarity">
    <text evidence="1">Belongs to the universal ribosomal protein uL18 family.</text>
</comment>
<name>RL18_ACIAD</name>
<organism>
    <name type="scientific">Acinetobacter baylyi (strain ATCC 33305 / BD413 / ADP1)</name>
    <dbReference type="NCBI Taxonomy" id="62977"/>
    <lineage>
        <taxon>Bacteria</taxon>
        <taxon>Pseudomonadati</taxon>
        <taxon>Pseudomonadota</taxon>
        <taxon>Gammaproteobacteria</taxon>
        <taxon>Moraxellales</taxon>
        <taxon>Moraxellaceae</taxon>
        <taxon>Acinetobacter</taxon>
    </lineage>
</organism>
<proteinExistence type="inferred from homology"/>
<accession>Q6F7S8</accession>
<evidence type="ECO:0000255" key="1">
    <source>
        <dbReference type="HAMAP-Rule" id="MF_01337"/>
    </source>
</evidence>
<evidence type="ECO:0000305" key="2"/>
<sequence>MNEKKQSRLRRAKSTRLHIRALGATRLCVNRTPRHIYAQVISADGGKVLAQASTLDTSLRSGTTGNVEAATKVGALIAERAKAAGVTKVAFDRSGFKYHGRIKALADAAREGGLEF</sequence>